<comment type="function">
    <text evidence="2 3">The small GTPases Rab are key regulators in vesicle trafficking (By similarity). Essential for maintaining the integrity of endosome-trans-Golgi network structure (By similarity). Together with LRRK2, plays a role in the retrograde trafficking pathway for recycling proteins, such as mannose 6 phosphate receptor (M6PR), between lysosomes and the Golgi apparatus in a retromer-dependent manner (By similarity). Recruits LRRK2 to the Golgi apparatus and stimulates LRRK2 kinase activity (By similarity). Stimulates phosphorylation of RAB10 'Thr-73' by LRRK2 (By similarity). Also regulates neuronal process morphology in the intact central nervous system (CNS) (By similarity).</text>
</comment>
<comment type="subunit">
    <text evidence="4">Interacts with LRRK2 (via the N-terminus); this interaction is direct and stimulates kinase activity.</text>
</comment>
<comment type="subcellular location">
    <subcellularLocation>
        <location evidence="2">Cell membrane</location>
        <topology evidence="5">Lipid-anchor</topology>
        <orientation evidence="5">Cytoplasmic side</orientation>
    </subcellularLocation>
    <subcellularLocation>
        <location evidence="2">Cytoplasm</location>
    </subcellularLocation>
    <subcellularLocation>
        <location evidence="2">Cytoplasm</location>
        <location evidence="2">Perinuclear region</location>
    </subcellularLocation>
    <subcellularLocation>
        <location evidence="2">Golgi apparatus</location>
    </subcellularLocation>
    <subcellularLocation>
        <location evidence="2">Golgi apparatus membrane</location>
    </subcellularLocation>
    <subcellularLocation>
        <location evidence="2">Golgi apparatus</location>
        <location evidence="2">trans-Golgi network</location>
    </subcellularLocation>
    <subcellularLocation>
        <location evidence="2">Cytoplasm</location>
        <location evidence="2">Cytoskeleton</location>
    </subcellularLocation>
    <text evidence="2 3">Colocalizes with GM130 at the Golgi apparatus (By similarity). Colocalizes with LRRK2 at dynamic tubules emerging from and retracting to the Golgi apparatus (By similarity). Colocalizes with TGN46 at the trans-Golgi network (TGN) (By similarity).</text>
</comment>
<comment type="similarity">
    <text evidence="5">Belongs to the small GTPase superfamily. Rab family.</text>
</comment>
<accession>Q91YQ1</accession>
<proteinExistence type="evidence at protein level"/>
<evidence type="ECO:0000250" key="1"/>
<evidence type="ECO:0000250" key="2">
    <source>
        <dbReference type="UniProtKB" id="O14966"/>
    </source>
</evidence>
<evidence type="ECO:0000250" key="3">
    <source>
        <dbReference type="UniProtKB" id="Q63481"/>
    </source>
</evidence>
<evidence type="ECO:0000269" key="4">
    <source>
    </source>
</evidence>
<evidence type="ECO:0000305" key="5"/>
<protein>
    <recommendedName>
        <fullName>Ras-related protein Rab-7L1</fullName>
    </recommendedName>
    <alternativeName>
        <fullName>Rab-7-like protein 1</fullName>
    </alternativeName>
    <alternativeName>
        <fullName evidence="2">Ras-related protein Rab-29</fullName>
    </alternativeName>
</protein>
<gene>
    <name type="primary">Rab29</name>
    <name type="synonym">Rab7l1</name>
</gene>
<organism>
    <name type="scientific">Mus musculus</name>
    <name type="common">Mouse</name>
    <dbReference type="NCBI Taxonomy" id="10090"/>
    <lineage>
        <taxon>Eukaryota</taxon>
        <taxon>Metazoa</taxon>
        <taxon>Chordata</taxon>
        <taxon>Craniata</taxon>
        <taxon>Vertebrata</taxon>
        <taxon>Euteleostomi</taxon>
        <taxon>Mammalia</taxon>
        <taxon>Eutheria</taxon>
        <taxon>Euarchontoglires</taxon>
        <taxon>Glires</taxon>
        <taxon>Rodentia</taxon>
        <taxon>Myomorpha</taxon>
        <taxon>Muroidea</taxon>
        <taxon>Muridae</taxon>
        <taxon>Murinae</taxon>
        <taxon>Mus</taxon>
        <taxon>Mus</taxon>
    </lineage>
</organism>
<keyword id="KW-1003">Cell membrane</keyword>
<keyword id="KW-0963">Cytoplasm</keyword>
<keyword id="KW-0206">Cytoskeleton</keyword>
<keyword id="KW-0221">Differentiation</keyword>
<keyword id="KW-0333">Golgi apparatus</keyword>
<keyword id="KW-0342">GTP-binding</keyword>
<keyword id="KW-0449">Lipoprotein</keyword>
<keyword id="KW-0472">Membrane</keyword>
<keyword id="KW-0547">Nucleotide-binding</keyword>
<keyword id="KW-0597">Phosphoprotein</keyword>
<keyword id="KW-0636">Prenylation</keyword>
<keyword id="KW-0653">Protein transport</keyword>
<keyword id="KW-1185">Reference proteome</keyword>
<keyword id="KW-0813">Transport</keyword>
<dbReference type="EMBL" id="BC016133">
    <property type="protein sequence ID" value="AAH16133.1"/>
    <property type="molecule type" value="mRNA"/>
</dbReference>
<dbReference type="EMBL" id="BC029056">
    <property type="protein sequence ID" value="AAH29056.1"/>
    <property type="molecule type" value="mRNA"/>
</dbReference>
<dbReference type="CCDS" id="CCDS15276.1"/>
<dbReference type="SMR" id="Q91YQ1"/>
<dbReference type="FunCoup" id="Q91YQ1">
    <property type="interactions" value="572"/>
</dbReference>
<dbReference type="IntAct" id="Q91YQ1">
    <property type="interactions" value="2"/>
</dbReference>
<dbReference type="STRING" id="10090.ENSMUSP00000027693"/>
<dbReference type="iPTMnet" id="Q91YQ1"/>
<dbReference type="PhosphoSitePlus" id="Q91YQ1"/>
<dbReference type="jPOST" id="Q91YQ1"/>
<dbReference type="PaxDb" id="10090-ENSMUSP00000027693"/>
<dbReference type="ProteomicsDB" id="253154"/>
<dbReference type="Pumba" id="Q91YQ1"/>
<dbReference type="ABCD" id="Q91YQ1">
    <property type="antibodies" value="20 sequenced antibodies"/>
</dbReference>
<dbReference type="AGR" id="MGI:2385107"/>
<dbReference type="MGI" id="MGI:2385107">
    <property type="gene designation" value="Rab29"/>
</dbReference>
<dbReference type="eggNOG" id="KOG4423">
    <property type="taxonomic scope" value="Eukaryota"/>
</dbReference>
<dbReference type="InParanoid" id="Q91YQ1"/>
<dbReference type="PhylomeDB" id="Q91YQ1"/>
<dbReference type="Reactome" id="R-MMU-8873719">
    <property type="pathway name" value="RAB geranylgeranylation"/>
</dbReference>
<dbReference type="ChiTaRS" id="Rab29">
    <property type="organism name" value="mouse"/>
</dbReference>
<dbReference type="PRO" id="PR:Q91YQ1"/>
<dbReference type="Proteomes" id="UP000000589">
    <property type="component" value="Unplaced"/>
</dbReference>
<dbReference type="RNAct" id="Q91YQ1">
    <property type="molecule type" value="protein"/>
</dbReference>
<dbReference type="GO" id="GO:0005737">
    <property type="term" value="C:cytoplasm"/>
    <property type="evidence" value="ECO:0000250"/>
    <property type="project" value="UniProtKB"/>
</dbReference>
<dbReference type="GO" id="GO:0005856">
    <property type="term" value="C:cytoskeleton"/>
    <property type="evidence" value="ECO:0007669"/>
    <property type="project" value="UniProtKB-SubCell"/>
</dbReference>
<dbReference type="GO" id="GO:0005829">
    <property type="term" value="C:cytosol"/>
    <property type="evidence" value="ECO:0007669"/>
    <property type="project" value="GOC"/>
</dbReference>
<dbReference type="GO" id="GO:0005794">
    <property type="term" value="C:Golgi apparatus"/>
    <property type="evidence" value="ECO:0000314"/>
    <property type="project" value="MGI"/>
</dbReference>
<dbReference type="GO" id="GO:0000139">
    <property type="term" value="C:Golgi membrane"/>
    <property type="evidence" value="ECO:0007669"/>
    <property type="project" value="UniProtKB-SubCell"/>
</dbReference>
<dbReference type="GO" id="GO:0048471">
    <property type="term" value="C:perinuclear region of cytoplasm"/>
    <property type="evidence" value="ECO:0007669"/>
    <property type="project" value="UniProtKB-SubCell"/>
</dbReference>
<dbReference type="GO" id="GO:0005886">
    <property type="term" value="C:plasma membrane"/>
    <property type="evidence" value="ECO:0007669"/>
    <property type="project" value="UniProtKB-SubCell"/>
</dbReference>
<dbReference type="GO" id="GO:0005802">
    <property type="term" value="C:trans-Golgi network"/>
    <property type="evidence" value="ECO:0000250"/>
    <property type="project" value="UniProtKB"/>
</dbReference>
<dbReference type="GO" id="GO:0031982">
    <property type="term" value="C:vesicle"/>
    <property type="evidence" value="ECO:0000314"/>
    <property type="project" value="MGI"/>
</dbReference>
<dbReference type="GO" id="GO:0005525">
    <property type="term" value="F:GTP binding"/>
    <property type="evidence" value="ECO:0000314"/>
    <property type="project" value="MGI"/>
</dbReference>
<dbReference type="GO" id="GO:0003924">
    <property type="term" value="F:GTPase activity"/>
    <property type="evidence" value="ECO:0007669"/>
    <property type="project" value="InterPro"/>
</dbReference>
<dbReference type="GO" id="GO:0030154">
    <property type="term" value="P:cell differentiation"/>
    <property type="evidence" value="ECO:0007669"/>
    <property type="project" value="UniProtKB-KW"/>
</dbReference>
<dbReference type="GO" id="GO:0060271">
    <property type="term" value="P:cilium assembly"/>
    <property type="evidence" value="ECO:0000315"/>
    <property type="project" value="ParkinsonsUK-UCL"/>
</dbReference>
<dbReference type="GO" id="GO:0007030">
    <property type="term" value="P:Golgi organization"/>
    <property type="evidence" value="ECO:0000316"/>
    <property type="project" value="MGI"/>
</dbReference>
<dbReference type="GO" id="GO:0090316">
    <property type="term" value="P:positive regulation of intracellular protein transport"/>
    <property type="evidence" value="ECO:0000250"/>
    <property type="project" value="UniProtKB"/>
</dbReference>
<dbReference type="GO" id="GO:1903441">
    <property type="term" value="P:protein localization to ciliary membrane"/>
    <property type="evidence" value="ECO:0000315"/>
    <property type="project" value="ParkinsonsUK-UCL"/>
</dbReference>
<dbReference type="GO" id="GO:0015031">
    <property type="term" value="P:protein transport"/>
    <property type="evidence" value="ECO:0007669"/>
    <property type="project" value="UniProtKB-KW"/>
</dbReference>
<dbReference type="GO" id="GO:1905279">
    <property type="term" value="P:regulation of retrograde transport, endosome to Golgi"/>
    <property type="evidence" value="ECO:0000303"/>
    <property type="project" value="ParkinsonsUK-UCL"/>
</dbReference>
<dbReference type="GO" id="GO:0042147">
    <property type="term" value="P:retrograde transport, endosome to Golgi"/>
    <property type="evidence" value="ECO:0000250"/>
    <property type="project" value="UniProtKB"/>
</dbReference>
<dbReference type="CDD" id="cd04107">
    <property type="entry name" value="Rab32_Rab38"/>
    <property type="match status" value="1"/>
</dbReference>
<dbReference type="FunFam" id="3.40.50.300:FF:000222">
    <property type="entry name" value="RAB32, member RAS oncogene family"/>
    <property type="match status" value="1"/>
</dbReference>
<dbReference type="Gene3D" id="3.40.50.300">
    <property type="entry name" value="P-loop containing nucleotide triphosphate hydrolases"/>
    <property type="match status" value="1"/>
</dbReference>
<dbReference type="InterPro" id="IPR027417">
    <property type="entry name" value="P-loop_NTPase"/>
</dbReference>
<dbReference type="InterPro" id="IPR030697">
    <property type="entry name" value="Rab29/Rab38/Rab32"/>
</dbReference>
<dbReference type="InterPro" id="IPR005225">
    <property type="entry name" value="Small_GTP-bd"/>
</dbReference>
<dbReference type="InterPro" id="IPR001806">
    <property type="entry name" value="Small_GTPase"/>
</dbReference>
<dbReference type="NCBIfam" id="TIGR00231">
    <property type="entry name" value="small_GTP"/>
    <property type="match status" value="1"/>
</dbReference>
<dbReference type="PANTHER" id="PTHR47981">
    <property type="entry name" value="RAB FAMILY"/>
    <property type="match status" value="1"/>
</dbReference>
<dbReference type="PANTHER" id="PTHR47981:SF42">
    <property type="entry name" value="RAS-RELATED PROTEIN RAB-7L1-LIKE ISOFORM X1"/>
    <property type="match status" value="1"/>
</dbReference>
<dbReference type="Pfam" id="PF00071">
    <property type="entry name" value="Ras"/>
    <property type="match status" value="1"/>
</dbReference>
<dbReference type="PRINTS" id="PR00449">
    <property type="entry name" value="RASTRNSFRMNG"/>
</dbReference>
<dbReference type="SMART" id="SM00175">
    <property type="entry name" value="RAB"/>
    <property type="match status" value="1"/>
</dbReference>
<dbReference type="SMART" id="SM00176">
    <property type="entry name" value="RAN"/>
    <property type="match status" value="1"/>
</dbReference>
<dbReference type="SMART" id="SM00173">
    <property type="entry name" value="RAS"/>
    <property type="match status" value="1"/>
</dbReference>
<dbReference type="SMART" id="SM00174">
    <property type="entry name" value="RHO"/>
    <property type="match status" value="1"/>
</dbReference>
<dbReference type="SUPFAM" id="SSF52540">
    <property type="entry name" value="P-loop containing nucleoside triphosphate hydrolases"/>
    <property type="match status" value="1"/>
</dbReference>
<dbReference type="PROSITE" id="PS51419">
    <property type="entry name" value="RAB"/>
    <property type="match status" value="1"/>
</dbReference>
<feature type="chain" id="PRO_0000121128" description="Ras-related protein Rab-7L1">
    <location>
        <begin position="1"/>
        <end position="204"/>
    </location>
</feature>
<feature type="short sequence motif" description="Effector region" evidence="1">
    <location>
        <begin position="36"/>
        <end position="44"/>
    </location>
</feature>
<feature type="binding site" evidence="2">
    <location>
        <position position="33"/>
    </location>
    <ligand>
        <name>GTP</name>
        <dbReference type="ChEBI" id="CHEBI:37565"/>
    </ligand>
</feature>
<feature type="binding site" evidence="2">
    <location>
        <position position="34"/>
    </location>
    <ligand>
        <name>GTP</name>
        <dbReference type="ChEBI" id="CHEBI:37565"/>
    </ligand>
</feature>
<feature type="binding site" evidence="2">
    <location>
        <position position="35"/>
    </location>
    <ligand>
        <name>GTP</name>
        <dbReference type="ChEBI" id="CHEBI:37565"/>
    </ligand>
</feature>
<feature type="binding site" evidence="2">
    <location>
        <position position="36"/>
    </location>
    <ligand>
        <name>GTP</name>
        <dbReference type="ChEBI" id="CHEBI:37565"/>
    </ligand>
</feature>
<feature type="binding site" evidence="2">
    <location>
        <position position="37"/>
    </location>
    <ligand>
        <name>GTP</name>
        <dbReference type="ChEBI" id="CHEBI:37565"/>
    </ligand>
</feature>
<feature type="binding site" evidence="2">
    <location>
        <position position="39"/>
    </location>
    <ligand>
        <name>GTP</name>
        <dbReference type="ChEBI" id="CHEBI:37565"/>
    </ligand>
</feature>
<feature type="binding site" evidence="2">
    <location>
        <position position="126"/>
    </location>
    <ligand>
        <name>GTP</name>
        <dbReference type="ChEBI" id="CHEBI:37565"/>
    </ligand>
</feature>
<feature type="binding site" evidence="2">
    <location>
        <position position="156"/>
    </location>
    <ligand>
        <name>GTP</name>
        <dbReference type="ChEBI" id="CHEBI:37565"/>
    </ligand>
</feature>
<feature type="binding site" evidence="2">
    <location>
        <position position="157"/>
    </location>
    <ligand>
        <name>GTP</name>
        <dbReference type="ChEBI" id="CHEBI:37565"/>
    </ligand>
</feature>
<feature type="modified residue" description="Phosphothreonine; by LRRK2" evidence="2">
    <location>
        <position position="71"/>
    </location>
</feature>
<feature type="modified residue" description="Phosphoserine" evidence="2">
    <location>
        <position position="72"/>
    </location>
</feature>
<feature type="lipid moiety-binding region" description="S-geranylgeranyl cysteine" evidence="1">
    <location>
        <position position="203"/>
    </location>
</feature>
<feature type="lipid moiety-binding region" description="S-geranylgeranyl cysteine" evidence="1">
    <location>
        <position position="204"/>
    </location>
</feature>
<name>RAB7L_MOUSE</name>
<sequence>MGSRDHLFKVLVVGDAAVGKTSLVQRYSQDSFSKHYKSTVGVDFALKVLQWSDSEMVRLQLWDIAGQERFTSMTRLYYRDASACVIMFDVTNATTFSNSQRWKQDLDSKLTLPSGEPVPCLLLANKSDLSPWAVSRDQIDRFSKENGFTGWTETSVKENKNINEAMRVLVEKMMNNSREDVMSLSTQGNYINLQAKPSSGWTCC</sequence>
<reference key="1">
    <citation type="journal article" date="2004" name="Genome Res.">
        <title>The status, quality, and expansion of the NIH full-length cDNA project: the Mammalian Gene Collection (MGC).</title>
        <authorList>
            <consortium name="The MGC Project Team"/>
        </authorList>
    </citation>
    <scope>NUCLEOTIDE SEQUENCE [LARGE SCALE MRNA]</scope>
    <source>
        <strain>FVB/N</strain>
        <tissue>Mammary tumor</tissue>
    </source>
</reference>
<reference key="2">
    <citation type="journal article" date="2010" name="Cell">
        <title>A tissue-specific atlas of mouse protein phosphorylation and expression.</title>
        <authorList>
            <person name="Huttlin E.L."/>
            <person name="Jedrychowski M.P."/>
            <person name="Elias J.E."/>
            <person name="Goswami T."/>
            <person name="Rad R."/>
            <person name="Beausoleil S.A."/>
            <person name="Villen J."/>
            <person name="Haas W."/>
            <person name="Sowa M.E."/>
            <person name="Gygi S.P."/>
        </authorList>
    </citation>
    <scope>IDENTIFICATION BY MASS SPECTROMETRY [LARGE SCALE ANALYSIS]</scope>
    <source>
        <tissue>Kidney</tissue>
        <tissue>Pancreas</tissue>
    </source>
</reference>
<reference key="3">
    <citation type="journal article" date="2013" name="Neuron">
        <title>RAB7L1 interacts with LRRK2 to modify intraneuronal protein sorting and Parkinson's disease risk.</title>
        <authorList>
            <person name="MacLeod D.A."/>
            <person name="Rhinn H."/>
            <person name="Kuwahara T."/>
            <person name="Zolin A."/>
            <person name="Di Paolo G."/>
            <person name="McCabe B.D."/>
            <person name="MacCabe B.D."/>
            <person name="Marder K.S."/>
            <person name="Honig L.S."/>
            <person name="Clark L.N."/>
            <person name="Small S.A."/>
            <person name="Abeliovich A."/>
        </authorList>
    </citation>
    <scope>INTERACTION WITH LRRK2</scope>
</reference>